<sequence>MARKFELKDYRNIGIMAHIDAGKTTTTERILFHTGKIHKIGETHDGVSQMDWMEQEKERGITITSAATTAFWKGKRINIIDTPGHVDFTVEVERSLRVLDGAVAVLDAQSGVEPQTETVWRQATNYSVPRIVYVNKMDKAGANFEASIESVRTKLNGNAVAIQLNIGAEADFSGLIDLVEMKAYNYDGQKEEIEYEIPIPEDLFEKASQMRLALAEAVADYDEEIFNNLLEEKEILPEQLKAAIRAATITGNFFPVVCGSSFKNKGVKKMIDAVIDYLPSPVDVPPIKAFRDEEEITIEASDDQEFSALAFKIMNDPFVGSLTFFRVYSGVLKKGTYIINSTKGKKERVGRILAMHANSREEIDEVRTGDIGAFVGLKDTTTGDSLISEKAKTFVLERMNFPEPVISQSLEPFSKAEIEKLATALQKLANEDPTFKTWTDIETGQTIIAGMGELHLDIIVDRLKREFNVQARVGKPQVSYRETITKSAEVEGKYIKQSGGRGQYGHVWIKFEPNPEEGFDFIDKIVGGKIPKEYIKSIQKGLEEKMQAGILAGYPLINLRATLFDGSFHEVDSSEMAFKIAASKALSRARDAVGTVLLEPIMDVSVFAPSEYAGDVMGDLSRRRGLVREQETRSDGANVIRGHVPLAEMFGYSTQLRSMTSGRGTYQMQFNHYEIVPKNISDVIVKQRAIKEDD</sequence>
<evidence type="ECO:0000255" key="1">
    <source>
        <dbReference type="HAMAP-Rule" id="MF_00054"/>
    </source>
</evidence>
<organism>
    <name type="scientific">Mesomycoplasma hyopneumoniae (strain J / ATCC 25934 / NCTC 10110)</name>
    <name type="common">Mycoplasma hyopneumoniae</name>
    <dbReference type="NCBI Taxonomy" id="262719"/>
    <lineage>
        <taxon>Bacteria</taxon>
        <taxon>Bacillati</taxon>
        <taxon>Mycoplasmatota</taxon>
        <taxon>Mycoplasmoidales</taxon>
        <taxon>Metamycoplasmataceae</taxon>
        <taxon>Mesomycoplasma</taxon>
    </lineage>
</organism>
<name>EFG_MESHJ</name>
<protein>
    <recommendedName>
        <fullName evidence="1">Elongation factor G</fullName>
        <shortName evidence="1">EF-G</shortName>
    </recommendedName>
</protein>
<feature type="chain" id="PRO_0000225218" description="Elongation factor G">
    <location>
        <begin position="1"/>
        <end position="694"/>
    </location>
</feature>
<feature type="domain" description="tr-type G">
    <location>
        <begin position="8"/>
        <end position="282"/>
    </location>
</feature>
<feature type="binding site" evidence="1">
    <location>
        <begin position="17"/>
        <end position="24"/>
    </location>
    <ligand>
        <name>GTP</name>
        <dbReference type="ChEBI" id="CHEBI:37565"/>
    </ligand>
</feature>
<feature type="binding site" evidence="1">
    <location>
        <begin position="81"/>
        <end position="85"/>
    </location>
    <ligand>
        <name>GTP</name>
        <dbReference type="ChEBI" id="CHEBI:37565"/>
    </ligand>
</feature>
<feature type="binding site" evidence="1">
    <location>
        <begin position="135"/>
        <end position="138"/>
    </location>
    <ligand>
        <name>GTP</name>
        <dbReference type="ChEBI" id="CHEBI:37565"/>
    </ligand>
</feature>
<accession>Q4AAQ6</accession>
<keyword id="KW-0963">Cytoplasm</keyword>
<keyword id="KW-0251">Elongation factor</keyword>
<keyword id="KW-0342">GTP-binding</keyword>
<keyword id="KW-0547">Nucleotide-binding</keyword>
<keyword id="KW-0648">Protein biosynthesis</keyword>
<comment type="function">
    <text evidence="1">Catalyzes the GTP-dependent ribosomal translocation step during translation elongation. During this step, the ribosome changes from the pre-translocational (PRE) to the post-translocational (POST) state as the newly formed A-site-bound peptidyl-tRNA and P-site-bound deacylated tRNA move to the P and E sites, respectively. Catalyzes the coordinated movement of the two tRNA molecules, the mRNA and conformational changes in the ribosome.</text>
</comment>
<comment type="subcellular location">
    <subcellularLocation>
        <location evidence="1">Cytoplasm</location>
    </subcellularLocation>
</comment>
<comment type="similarity">
    <text evidence="1">Belongs to the TRAFAC class translation factor GTPase superfamily. Classic translation factor GTPase family. EF-G/EF-2 subfamily.</text>
</comment>
<reference key="1">
    <citation type="journal article" date="2005" name="J. Bacteriol.">
        <title>Swine and poultry pathogens: the complete genome sequences of two strains of Mycoplasma hyopneumoniae and a strain of Mycoplasma synoviae.</title>
        <authorList>
            <person name="Vasconcelos A.T.R."/>
            <person name="Ferreira H.B."/>
            <person name="Bizarro C.V."/>
            <person name="Bonatto S.L."/>
            <person name="Carvalho M.O."/>
            <person name="Pinto P.M."/>
            <person name="Almeida D.F."/>
            <person name="Almeida L.G.P."/>
            <person name="Almeida R."/>
            <person name="Alves-Junior L."/>
            <person name="Assuncao E.N."/>
            <person name="Azevedo V.A.C."/>
            <person name="Bogo M.R."/>
            <person name="Brigido M.M."/>
            <person name="Brocchi M."/>
            <person name="Burity H.A."/>
            <person name="Camargo A.A."/>
            <person name="Camargo S.S."/>
            <person name="Carepo M.S."/>
            <person name="Carraro D.M."/>
            <person name="de Mattos Cascardo J.C."/>
            <person name="Castro L.A."/>
            <person name="Cavalcanti G."/>
            <person name="Chemale G."/>
            <person name="Collevatti R.G."/>
            <person name="Cunha C.W."/>
            <person name="Dallagiovanna B."/>
            <person name="Dambros B.P."/>
            <person name="Dellagostin O.A."/>
            <person name="Falcao C."/>
            <person name="Fantinatti-Garboggini F."/>
            <person name="Felipe M.S.S."/>
            <person name="Fiorentin L."/>
            <person name="Franco G.R."/>
            <person name="Freitas N.S.A."/>
            <person name="Frias D."/>
            <person name="Grangeiro T.B."/>
            <person name="Grisard E.C."/>
            <person name="Guimaraes C.T."/>
            <person name="Hungria M."/>
            <person name="Jardim S.N."/>
            <person name="Krieger M.A."/>
            <person name="Laurino J.P."/>
            <person name="Lima L.F.A."/>
            <person name="Lopes M.I."/>
            <person name="Loreto E.L.S."/>
            <person name="Madeira H.M.F."/>
            <person name="Manfio G.P."/>
            <person name="Maranhao A.Q."/>
            <person name="Martinkovics C.T."/>
            <person name="Medeiros S.R.B."/>
            <person name="Moreira M.A.M."/>
            <person name="Neiva M."/>
            <person name="Ramalho-Neto C.E."/>
            <person name="Nicolas M.F."/>
            <person name="Oliveira S.C."/>
            <person name="Paixao R.F.C."/>
            <person name="Pedrosa F.O."/>
            <person name="Pena S.D.J."/>
            <person name="Pereira M."/>
            <person name="Pereira-Ferrari L."/>
            <person name="Piffer I."/>
            <person name="Pinto L.S."/>
            <person name="Potrich D.P."/>
            <person name="Salim A.C.M."/>
            <person name="Santos F.R."/>
            <person name="Schmitt R."/>
            <person name="Schneider M.P.C."/>
            <person name="Schrank A."/>
            <person name="Schrank I.S."/>
            <person name="Schuck A.F."/>
            <person name="Seuanez H.N."/>
            <person name="Silva D.W."/>
            <person name="Silva R."/>
            <person name="Silva S.C."/>
            <person name="Soares C.M.A."/>
            <person name="Souza K.R.L."/>
            <person name="Souza R.C."/>
            <person name="Staats C.C."/>
            <person name="Steffens M.B.R."/>
            <person name="Teixeira S.M.R."/>
            <person name="Urmenyi T.P."/>
            <person name="Vainstein M.H."/>
            <person name="Zuccherato L.W."/>
            <person name="Simpson A.J.G."/>
            <person name="Zaha A."/>
        </authorList>
    </citation>
    <scope>NUCLEOTIDE SEQUENCE [LARGE SCALE GENOMIC DNA]</scope>
    <source>
        <strain>J / ATCC 25934 / NCTC 10110</strain>
    </source>
</reference>
<dbReference type="EMBL" id="AE017243">
    <property type="protein sequence ID" value="AAZ44165.2"/>
    <property type="molecule type" value="Genomic_DNA"/>
</dbReference>
<dbReference type="RefSeq" id="WP_011205921.1">
    <property type="nucleotide sequence ID" value="NC_007295.1"/>
</dbReference>
<dbReference type="SMR" id="Q4AAQ6"/>
<dbReference type="GeneID" id="41334361"/>
<dbReference type="KEGG" id="mhj:MHJ_0071"/>
<dbReference type="eggNOG" id="COG0480">
    <property type="taxonomic scope" value="Bacteria"/>
</dbReference>
<dbReference type="HOGENOM" id="CLU_002794_4_1_14"/>
<dbReference type="OrthoDB" id="9804431at2"/>
<dbReference type="Proteomes" id="UP000000548">
    <property type="component" value="Chromosome"/>
</dbReference>
<dbReference type="GO" id="GO:0005737">
    <property type="term" value="C:cytoplasm"/>
    <property type="evidence" value="ECO:0007669"/>
    <property type="project" value="UniProtKB-SubCell"/>
</dbReference>
<dbReference type="GO" id="GO:0005525">
    <property type="term" value="F:GTP binding"/>
    <property type="evidence" value="ECO:0007669"/>
    <property type="project" value="UniProtKB-UniRule"/>
</dbReference>
<dbReference type="GO" id="GO:0003924">
    <property type="term" value="F:GTPase activity"/>
    <property type="evidence" value="ECO:0007669"/>
    <property type="project" value="InterPro"/>
</dbReference>
<dbReference type="GO" id="GO:0003746">
    <property type="term" value="F:translation elongation factor activity"/>
    <property type="evidence" value="ECO:0007669"/>
    <property type="project" value="UniProtKB-UniRule"/>
</dbReference>
<dbReference type="GO" id="GO:0032790">
    <property type="term" value="P:ribosome disassembly"/>
    <property type="evidence" value="ECO:0007669"/>
    <property type="project" value="TreeGrafter"/>
</dbReference>
<dbReference type="CDD" id="cd01886">
    <property type="entry name" value="EF-G"/>
    <property type="match status" value="1"/>
</dbReference>
<dbReference type="CDD" id="cd16262">
    <property type="entry name" value="EFG_III"/>
    <property type="match status" value="1"/>
</dbReference>
<dbReference type="CDD" id="cd01434">
    <property type="entry name" value="EFG_mtEFG1_IV"/>
    <property type="match status" value="1"/>
</dbReference>
<dbReference type="CDD" id="cd03713">
    <property type="entry name" value="EFG_mtEFG_C"/>
    <property type="match status" value="1"/>
</dbReference>
<dbReference type="CDD" id="cd04088">
    <property type="entry name" value="EFG_mtEFG_II"/>
    <property type="match status" value="1"/>
</dbReference>
<dbReference type="FunFam" id="2.40.30.10:FF:000006">
    <property type="entry name" value="Elongation factor G"/>
    <property type="match status" value="1"/>
</dbReference>
<dbReference type="FunFam" id="3.30.230.10:FF:000003">
    <property type="entry name" value="Elongation factor G"/>
    <property type="match status" value="1"/>
</dbReference>
<dbReference type="FunFam" id="3.30.70.240:FF:000001">
    <property type="entry name" value="Elongation factor G"/>
    <property type="match status" value="1"/>
</dbReference>
<dbReference type="FunFam" id="3.30.70.870:FF:000001">
    <property type="entry name" value="Elongation factor G"/>
    <property type="match status" value="1"/>
</dbReference>
<dbReference type="FunFam" id="3.40.50.300:FF:000029">
    <property type="entry name" value="Elongation factor G"/>
    <property type="match status" value="1"/>
</dbReference>
<dbReference type="Gene3D" id="3.30.230.10">
    <property type="match status" value="1"/>
</dbReference>
<dbReference type="Gene3D" id="3.30.70.240">
    <property type="match status" value="1"/>
</dbReference>
<dbReference type="Gene3D" id="3.30.70.870">
    <property type="entry name" value="Elongation Factor G (Translational Gtpase), domain 3"/>
    <property type="match status" value="1"/>
</dbReference>
<dbReference type="Gene3D" id="3.40.50.300">
    <property type="entry name" value="P-loop containing nucleotide triphosphate hydrolases"/>
    <property type="match status" value="1"/>
</dbReference>
<dbReference type="Gene3D" id="2.40.30.10">
    <property type="entry name" value="Translation factors"/>
    <property type="match status" value="1"/>
</dbReference>
<dbReference type="HAMAP" id="MF_00054_B">
    <property type="entry name" value="EF_G_EF_2_B"/>
    <property type="match status" value="1"/>
</dbReference>
<dbReference type="InterPro" id="IPR041095">
    <property type="entry name" value="EFG_II"/>
</dbReference>
<dbReference type="InterPro" id="IPR009022">
    <property type="entry name" value="EFG_III"/>
</dbReference>
<dbReference type="InterPro" id="IPR035647">
    <property type="entry name" value="EFG_III/V"/>
</dbReference>
<dbReference type="InterPro" id="IPR047872">
    <property type="entry name" value="EFG_IV"/>
</dbReference>
<dbReference type="InterPro" id="IPR035649">
    <property type="entry name" value="EFG_V"/>
</dbReference>
<dbReference type="InterPro" id="IPR000640">
    <property type="entry name" value="EFG_V-like"/>
</dbReference>
<dbReference type="InterPro" id="IPR004161">
    <property type="entry name" value="EFTu-like_2"/>
</dbReference>
<dbReference type="InterPro" id="IPR031157">
    <property type="entry name" value="G_TR_CS"/>
</dbReference>
<dbReference type="InterPro" id="IPR027417">
    <property type="entry name" value="P-loop_NTPase"/>
</dbReference>
<dbReference type="InterPro" id="IPR020568">
    <property type="entry name" value="Ribosomal_Su5_D2-typ_SF"/>
</dbReference>
<dbReference type="InterPro" id="IPR014721">
    <property type="entry name" value="Ribsml_uS5_D2-typ_fold_subgr"/>
</dbReference>
<dbReference type="InterPro" id="IPR005225">
    <property type="entry name" value="Small_GTP-bd"/>
</dbReference>
<dbReference type="InterPro" id="IPR000795">
    <property type="entry name" value="T_Tr_GTP-bd_dom"/>
</dbReference>
<dbReference type="InterPro" id="IPR009000">
    <property type="entry name" value="Transl_B-barrel_sf"/>
</dbReference>
<dbReference type="InterPro" id="IPR004540">
    <property type="entry name" value="Transl_elong_EFG/EF2"/>
</dbReference>
<dbReference type="InterPro" id="IPR005517">
    <property type="entry name" value="Transl_elong_EFG/EF2_IV"/>
</dbReference>
<dbReference type="NCBIfam" id="TIGR00484">
    <property type="entry name" value="EF-G"/>
    <property type="match status" value="1"/>
</dbReference>
<dbReference type="NCBIfam" id="NF009381">
    <property type="entry name" value="PRK12740.1-5"/>
    <property type="match status" value="1"/>
</dbReference>
<dbReference type="NCBIfam" id="TIGR00231">
    <property type="entry name" value="small_GTP"/>
    <property type="match status" value="1"/>
</dbReference>
<dbReference type="PANTHER" id="PTHR43261:SF1">
    <property type="entry name" value="RIBOSOME-RELEASING FACTOR 2, MITOCHONDRIAL"/>
    <property type="match status" value="1"/>
</dbReference>
<dbReference type="PANTHER" id="PTHR43261">
    <property type="entry name" value="TRANSLATION ELONGATION FACTOR G-RELATED"/>
    <property type="match status" value="1"/>
</dbReference>
<dbReference type="Pfam" id="PF00679">
    <property type="entry name" value="EFG_C"/>
    <property type="match status" value="1"/>
</dbReference>
<dbReference type="Pfam" id="PF14492">
    <property type="entry name" value="EFG_III"/>
    <property type="match status" value="1"/>
</dbReference>
<dbReference type="Pfam" id="PF03764">
    <property type="entry name" value="EFG_IV"/>
    <property type="match status" value="1"/>
</dbReference>
<dbReference type="Pfam" id="PF00009">
    <property type="entry name" value="GTP_EFTU"/>
    <property type="match status" value="1"/>
</dbReference>
<dbReference type="Pfam" id="PF03144">
    <property type="entry name" value="GTP_EFTU_D2"/>
    <property type="match status" value="1"/>
</dbReference>
<dbReference type="PRINTS" id="PR00315">
    <property type="entry name" value="ELONGATNFCT"/>
</dbReference>
<dbReference type="SMART" id="SM00838">
    <property type="entry name" value="EFG_C"/>
    <property type="match status" value="1"/>
</dbReference>
<dbReference type="SMART" id="SM00889">
    <property type="entry name" value="EFG_IV"/>
    <property type="match status" value="1"/>
</dbReference>
<dbReference type="SUPFAM" id="SSF54980">
    <property type="entry name" value="EF-G C-terminal domain-like"/>
    <property type="match status" value="2"/>
</dbReference>
<dbReference type="SUPFAM" id="SSF52540">
    <property type="entry name" value="P-loop containing nucleoside triphosphate hydrolases"/>
    <property type="match status" value="1"/>
</dbReference>
<dbReference type="SUPFAM" id="SSF54211">
    <property type="entry name" value="Ribosomal protein S5 domain 2-like"/>
    <property type="match status" value="1"/>
</dbReference>
<dbReference type="SUPFAM" id="SSF50447">
    <property type="entry name" value="Translation proteins"/>
    <property type="match status" value="1"/>
</dbReference>
<dbReference type="PROSITE" id="PS00301">
    <property type="entry name" value="G_TR_1"/>
    <property type="match status" value="1"/>
</dbReference>
<dbReference type="PROSITE" id="PS51722">
    <property type="entry name" value="G_TR_2"/>
    <property type="match status" value="1"/>
</dbReference>
<proteinExistence type="inferred from homology"/>
<gene>
    <name evidence="1" type="primary">fusA</name>
    <name type="ordered locus">MHJ_0071</name>
</gene>